<proteinExistence type="inferred from homology"/>
<feature type="chain" id="PRO_0000391877" description="E3 UFM1-protein ligase 1 homolog">
    <location>
        <begin position="1"/>
        <end position="784"/>
    </location>
</feature>
<feature type="region of interest" description="Disordered" evidence="2">
    <location>
        <begin position="398"/>
        <end position="472"/>
    </location>
</feature>
<feature type="compositionally biased region" description="Basic and acidic residues" evidence="2">
    <location>
        <begin position="398"/>
        <end position="414"/>
    </location>
</feature>
<sequence>MADWDEIKRLAADFQKAQLSTGLQRLSERNCIEIVRLLIEKGLIDVIYTNDGKEYLTQDHLKQEVKDELYVRGGRVNLIELARVLNVDFGKIEYTAKRLVEKDPNLHLLLGQLIETSYLQRLASEINQKLVQYGEIHIGQLTTTYDLPTDFILNKIVLANLHKVIFAKQDPTNAHIFFTQSYIARNKAKIRGALAAITKPTPISVILNLTDVPARILYMSLNEMSSLGSVTVQSPAGQYIPHVYQRMQAQWVKDYFKQNGHIMYETVTKLGVSDVRSFVQAQLPDEKLVQLKNCIIGNRLIDQVKDSMDMCVTSNSYLDISTILPSSLSDDNIEEILTHILTPTIRKQTYVFGMVVLTVNFMDECVKGCLELVNEHAKRAVESGSYQKYIAEKSIKHQEVDHGVMEEEKADKREERRKKASTGKGGGGAQGRETKTKSTKKHARGTRGNVSDSDDGGEIQTNASNKKGGKDPHIELITAKEIAKVVEKTLEPEGLEMLAKDVANHYFPILSKQALVKAHELYEQSLQKNNQNRRQTHASIQEKLNTLYNDIRLYEKGLKLFPADVQGQLLKYLLKTFGTDACNELCLYVASECNLNTNFNAPLTTEQRTKIANDSGPEYRPHLQTLCKALSASETVEDFLDKTEKTMQACSMMLKKIDKKKDRNLILCHKHGLLEQLTNCTDPALVLHLAVLIIFTISTQTMLHASGRHVSAILTFLQTVLSTDDSKVFNNYHDLVLKLLSTESSTTEEAKANAEDITKQLGELTPVVKNIAGNFKKAGVTPVE</sequence>
<organism>
    <name type="scientific">Anopheles gambiae</name>
    <name type="common">African malaria mosquito</name>
    <dbReference type="NCBI Taxonomy" id="7165"/>
    <lineage>
        <taxon>Eukaryota</taxon>
        <taxon>Metazoa</taxon>
        <taxon>Ecdysozoa</taxon>
        <taxon>Arthropoda</taxon>
        <taxon>Hexapoda</taxon>
        <taxon>Insecta</taxon>
        <taxon>Pterygota</taxon>
        <taxon>Neoptera</taxon>
        <taxon>Endopterygota</taxon>
        <taxon>Diptera</taxon>
        <taxon>Nematocera</taxon>
        <taxon>Culicoidea</taxon>
        <taxon>Culicidae</taxon>
        <taxon>Anophelinae</taxon>
        <taxon>Anopheles</taxon>
    </lineage>
</organism>
<evidence type="ECO:0000250" key="1">
    <source>
        <dbReference type="UniProtKB" id="O94874"/>
    </source>
</evidence>
<evidence type="ECO:0000256" key="2">
    <source>
        <dbReference type="SAM" id="MobiDB-lite"/>
    </source>
</evidence>
<evidence type="ECO:0000305" key="3"/>
<dbReference type="EC" id="2.3.2.-"/>
<dbReference type="EMBL" id="AAAB01008964">
    <property type="protein sequence ID" value="EAA12385.3"/>
    <property type="molecule type" value="Genomic_DNA"/>
</dbReference>
<dbReference type="RefSeq" id="XP_317778.3">
    <property type="nucleotide sequence ID" value="XM_317778.3"/>
</dbReference>
<dbReference type="SMR" id="Q7Q373"/>
<dbReference type="FunCoup" id="Q7Q373">
    <property type="interactions" value="2716"/>
</dbReference>
<dbReference type="STRING" id="7165.Q7Q373"/>
<dbReference type="PaxDb" id="7165-AGAP007742-PA"/>
<dbReference type="EnsemblMetazoa" id="AGAP007742-RA">
    <property type="protein sequence ID" value="AGAP007742-PA"/>
    <property type="gene ID" value="AGAP007742"/>
</dbReference>
<dbReference type="GeneID" id="1278223"/>
<dbReference type="KEGG" id="aga:1278223"/>
<dbReference type="CTD" id="23376"/>
<dbReference type="VEuPathDB" id="VectorBase:AGAMI1_005832"/>
<dbReference type="VEuPathDB" id="VectorBase:AGAP007742"/>
<dbReference type="eggNOG" id="KOG2235">
    <property type="taxonomic scope" value="Eukaryota"/>
</dbReference>
<dbReference type="HOGENOM" id="CLU_012417_1_1_1"/>
<dbReference type="InParanoid" id="Q7Q373"/>
<dbReference type="OMA" id="CILHASG"/>
<dbReference type="PhylomeDB" id="Q7Q373"/>
<dbReference type="Proteomes" id="UP000007062">
    <property type="component" value="Chromosome 3R"/>
</dbReference>
<dbReference type="GO" id="GO:0005789">
    <property type="term" value="C:endoplasmic reticulum membrane"/>
    <property type="evidence" value="ECO:0000318"/>
    <property type="project" value="GO_Central"/>
</dbReference>
<dbReference type="GO" id="GO:0061666">
    <property type="term" value="F:UFM1 ligase activity"/>
    <property type="evidence" value="ECO:0007669"/>
    <property type="project" value="InterPro"/>
</dbReference>
<dbReference type="GO" id="GO:0071568">
    <property type="term" value="F:UFM1 transferase activity"/>
    <property type="evidence" value="ECO:0000318"/>
    <property type="project" value="GO_Central"/>
</dbReference>
<dbReference type="GO" id="GO:0071569">
    <property type="term" value="P:protein ufmylation"/>
    <property type="evidence" value="ECO:0007669"/>
    <property type="project" value="InterPro"/>
</dbReference>
<dbReference type="GO" id="GO:0034976">
    <property type="term" value="P:response to endoplasmic reticulum stress"/>
    <property type="evidence" value="ECO:0000318"/>
    <property type="project" value="GO_Central"/>
</dbReference>
<dbReference type="GO" id="GO:0061709">
    <property type="term" value="P:reticulophagy"/>
    <property type="evidence" value="ECO:0000318"/>
    <property type="project" value="GO_Central"/>
</dbReference>
<dbReference type="InterPro" id="IPR018611">
    <property type="entry name" value="Ufl1"/>
</dbReference>
<dbReference type="InterPro" id="IPR056761">
    <property type="entry name" value="Ufl1-like_C"/>
</dbReference>
<dbReference type="InterPro" id="IPR056580">
    <property type="entry name" value="Ufl1_dom"/>
</dbReference>
<dbReference type="InterPro" id="IPR056579">
    <property type="entry name" value="Ufl1_N"/>
</dbReference>
<dbReference type="PANTHER" id="PTHR31057">
    <property type="entry name" value="E3 UFM1-PROTEIN LIGASE 1"/>
    <property type="match status" value="1"/>
</dbReference>
<dbReference type="PANTHER" id="PTHR31057:SF0">
    <property type="entry name" value="E3 UFM1-PROTEIN LIGASE 1"/>
    <property type="match status" value="1"/>
</dbReference>
<dbReference type="Pfam" id="PF09743">
    <property type="entry name" value="E3_UFM1_ligase"/>
    <property type="match status" value="1"/>
</dbReference>
<dbReference type="Pfam" id="PF23659">
    <property type="entry name" value="UFL1"/>
    <property type="match status" value="1"/>
</dbReference>
<dbReference type="Pfam" id="PF25041">
    <property type="entry name" value="UFL1_C"/>
    <property type="match status" value="1"/>
</dbReference>
<comment type="function">
    <text evidence="1">E3 UFM1-protein ligase that mediates ufmylation of target proteins.</text>
</comment>
<comment type="similarity">
    <text evidence="3">Belongs to the UFL1 family.</text>
</comment>
<gene>
    <name type="ORF">AGAP007742</name>
</gene>
<protein>
    <recommendedName>
        <fullName>E3 UFM1-protein ligase 1 homolog</fullName>
        <ecNumber>2.3.2.-</ecNumber>
    </recommendedName>
    <alternativeName>
        <fullName evidence="3">E3 UFM1-protein transferase 1 homolog</fullName>
    </alternativeName>
</protein>
<keyword id="KW-1185">Reference proteome</keyword>
<keyword id="KW-0808">Transferase</keyword>
<keyword id="KW-0833">Ubl conjugation pathway</keyword>
<accession>Q7Q373</accession>
<name>UFL1_ANOGA</name>
<reference key="1">
    <citation type="journal article" date="2002" name="Science">
        <title>The genome sequence of the malaria mosquito Anopheles gambiae.</title>
        <authorList>
            <person name="Holt R.A."/>
            <person name="Subramanian G.M."/>
            <person name="Halpern A."/>
            <person name="Sutton G.G."/>
            <person name="Charlab R."/>
            <person name="Nusskern D.R."/>
            <person name="Wincker P."/>
            <person name="Clark A.G."/>
            <person name="Ribeiro J.M.C."/>
            <person name="Wides R."/>
            <person name="Salzberg S.L."/>
            <person name="Loftus B.J."/>
            <person name="Yandell M.D."/>
            <person name="Majoros W.H."/>
            <person name="Rusch D.B."/>
            <person name="Lai Z."/>
            <person name="Kraft C.L."/>
            <person name="Abril J.F."/>
            <person name="Anthouard V."/>
            <person name="Arensburger P."/>
            <person name="Atkinson P.W."/>
            <person name="Baden H."/>
            <person name="de Berardinis V."/>
            <person name="Baldwin D."/>
            <person name="Benes V."/>
            <person name="Biedler J."/>
            <person name="Blass C."/>
            <person name="Bolanos R."/>
            <person name="Boscus D."/>
            <person name="Barnstead M."/>
            <person name="Cai S."/>
            <person name="Center A."/>
            <person name="Chaturverdi K."/>
            <person name="Christophides G.K."/>
            <person name="Chrystal M.A.M."/>
            <person name="Clamp M."/>
            <person name="Cravchik A."/>
            <person name="Curwen V."/>
            <person name="Dana A."/>
            <person name="Delcher A."/>
            <person name="Dew I."/>
            <person name="Evans C.A."/>
            <person name="Flanigan M."/>
            <person name="Grundschober-Freimoser A."/>
            <person name="Friedli L."/>
            <person name="Gu Z."/>
            <person name="Guan P."/>
            <person name="Guigo R."/>
            <person name="Hillenmeyer M.E."/>
            <person name="Hladun S.L."/>
            <person name="Hogan J.R."/>
            <person name="Hong Y.S."/>
            <person name="Hoover J."/>
            <person name="Jaillon O."/>
            <person name="Ke Z."/>
            <person name="Kodira C.D."/>
            <person name="Kokoza E."/>
            <person name="Koutsos A."/>
            <person name="Letunic I."/>
            <person name="Levitsky A.A."/>
            <person name="Liang Y."/>
            <person name="Lin J.-J."/>
            <person name="Lobo N.F."/>
            <person name="Lopez J.R."/>
            <person name="Malek J.A."/>
            <person name="McIntosh T.C."/>
            <person name="Meister S."/>
            <person name="Miller J.R."/>
            <person name="Mobarry C."/>
            <person name="Mongin E."/>
            <person name="Murphy S.D."/>
            <person name="O'Brochta D.A."/>
            <person name="Pfannkoch C."/>
            <person name="Qi R."/>
            <person name="Regier M.A."/>
            <person name="Remington K."/>
            <person name="Shao H."/>
            <person name="Sharakhova M.V."/>
            <person name="Sitter C.D."/>
            <person name="Shetty J."/>
            <person name="Smith T.J."/>
            <person name="Strong R."/>
            <person name="Sun J."/>
            <person name="Thomasova D."/>
            <person name="Ton L.Q."/>
            <person name="Topalis P."/>
            <person name="Tu Z.J."/>
            <person name="Unger M.F."/>
            <person name="Walenz B."/>
            <person name="Wang A.H."/>
            <person name="Wang J."/>
            <person name="Wang M."/>
            <person name="Wang X."/>
            <person name="Woodford K.J."/>
            <person name="Wortman J.R."/>
            <person name="Wu M."/>
            <person name="Yao A."/>
            <person name="Zdobnov E.M."/>
            <person name="Zhang H."/>
            <person name="Zhao Q."/>
            <person name="Zhao S."/>
            <person name="Zhu S.C."/>
            <person name="Zhimulev I."/>
            <person name="Coluzzi M."/>
            <person name="della Torre A."/>
            <person name="Roth C.W."/>
            <person name="Louis C."/>
            <person name="Kalush F."/>
            <person name="Mural R.J."/>
            <person name="Myers E.W."/>
            <person name="Adams M.D."/>
            <person name="Smith H.O."/>
            <person name="Broder S."/>
            <person name="Gardner M.J."/>
            <person name="Fraser C.M."/>
            <person name="Birney E."/>
            <person name="Bork P."/>
            <person name="Brey P.T."/>
            <person name="Venter J.C."/>
            <person name="Weissenbach J."/>
            <person name="Kafatos F.C."/>
            <person name="Collins F.H."/>
            <person name="Hoffman S.L."/>
        </authorList>
    </citation>
    <scope>NUCLEOTIDE SEQUENCE [LARGE SCALE GENOMIC DNA]</scope>
    <source>
        <strain>PEST</strain>
    </source>
</reference>